<protein>
    <recommendedName>
        <fullName evidence="1">Serine/threonine transporter SstT</fullName>
    </recommendedName>
    <alternativeName>
        <fullName evidence="1">Na(+)/serine-threonine symporter</fullName>
    </alternativeName>
</protein>
<dbReference type="EMBL" id="AL766852">
    <property type="protein sequence ID" value="CAD47341.1"/>
    <property type="molecule type" value="Genomic_DNA"/>
</dbReference>
<dbReference type="RefSeq" id="WP_000819594.1">
    <property type="nucleotide sequence ID" value="NC_004368.1"/>
</dbReference>
<dbReference type="SMR" id="Q8E3S4"/>
<dbReference type="KEGG" id="san:gbs1682"/>
<dbReference type="eggNOG" id="COG3633">
    <property type="taxonomic scope" value="Bacteria"/>
</dbReference>
<dbReference type="HOGENOM" id="CLU_044581_0_0_9"/>
<dbReference type="Proteomes" id="UP000000823">
    <property type="component" value="Chromosome"/>
</dbReference>
<dbReference type="GO" id="GO:0005886">
    <property type="term" value="C:plasma membrane"/>
    <property type="evidence" value="ECO:0007669"/>
    <property type="project" value="UniProtKB-SubCell"/>
</dbReference>
<dbReference type="GO" id="GO:0005295">
    <property type="term" value="F:neutral L-amino acid:sodium symporter activity"/>
    <property type="evidence" value="ECO:0007669"/>
    <property type="project" value="TreeGrafter"/>
</dbReference>
<dbReference type="GO" id="GO:0032329">
    <property type="term" value="P:serine transport"/>
    <property type="evidence" value="ECO:0007669"/>
    <property type="project" value="InterPro"/>
</dbReference>
<dbReference type="GO" id="GO:0015826">
    <property type="term" value="P:threonine transport"/>
    <property type="evidence" value="ECO:0007669"/>
    <property type="project" value="InterPro"/>
</dbReference>
<dbReference type="FunFam" id="1.10.3860.10:FF:000003">
    <property type="entry name" value="Serine/threonine transporter sstT"/>
    <property type="match status" value="1"/>
</dbReference>
<dbReference type="Gene3D" id="1.10.3860.10">
    <property type="entry name" value="Sodium:dicarboxylate symporter"/>
    <property type="match status" value="1"/>
</dbReference>
<dbReference type="HAMAP" id="MF_01582">
    <property type="entry name" value="Ser_Thr_transp_SstT"/>
    <property type="match status" value="1"/>
</dbReference>
<dbReference type="InterPro" id="IPR001991">
    <property type="entry name" value="Na-dicarboxylate_symporter"/>
</dbReference>
<dbReference type="InterPro" id="IPR036458">
    <property type="entry name" value="Na:dicarbo_symporter_sf"/>
</dbReference>
<dbReference type="InterPro" id="IPR023025">
    <property type="entry name" value="Ser_Thr_transp_SstT"/>
</dbReference>
<dbReference type="NCBIfam" id="NF010151">
    <property type="entry name" value="PRK13628.1"/>
    <property type="match status" value="1"/>
</dbReference>
<dbReference type="PANTHER" id="PTHR42865">
    <property type="entry name" value="PROTON/GLUTAMATE-ASPARTATE SYMPORTER"/>
    <property type="match status" value="1"/>
</dbReference>
<dbReference type="PANTHER" id="PTHR42865:SF8">
    <property type="entry name" value="SERINE_THREONINE TRANSPORTER SSTT"/>
    <property type="match status" value="1"/>
</dbReference>
<dbReference type="Pfam" id="PF00375">
    <property type="entry name" value="SDF"/>
    <property type="match status" value="1"/>
</dbReference>
<dbReference type="PRINTS" id="PR00173">
    <property type="entry name" value="EDTRNSPORT"/>
</dbReference>
<dbReference type="SUPFAM" id="SSF118215">
    <property type="entry name" value="Proton glutamate symport protein"/>
    <property type="match status" value="1"/>
</dbReference>
<organism>
    <name type="scientific">Streptococcus agalactiae serotype III (strain NEM316)</name>
    <dbReference type="NCBI Taxonomy" id="211110"/>
    <lineage>
        <taxon>Bacteria</taxon>
        <taxon>Bacillati</taxon>
        <taxon>Bacillota</taxon>
        <taxon>Bacilli</taxon>
        <taxon>Lactobacillales</taxon>
        <taxon>Streptococcaceae</taxon>
        <taxon>Streptococcus</taxon>
    </lineage>
</organism>
<reference key="1">
    <citation type="journal article" date="2002" name="Mol. Microbiol.">
        <title>Genome sequence of Streptococcus agalactiae, a pathogen causing invasive neonatal disease.</title>
        <authorList>
            <person name="Glaser P."/>
            <person name="Rusniok C."/>
            <person name="Buchrieser C."/>
            <person name="Chevalier F."/>
            <person name="Frangeul L."/>
            <person name="Msadek T."/>
            <person name="Zouine M."/>
            <person name="Couve E."/>
            <person name="Lalioui L."/>
            <person name="Poyart C."/>
            <person name="Trieu-Cuot P."/>
            <person name="Kunst F."/>
        </authorList>
    </citation>
    <scope>NUCLEOTIDE SEQUENCE [LARGE SCALE GENOMIC DNA]</scope>
    <source>
        <strain>NEM316</strain>
    </source>
</reference>
<accession>Q8E3S4</accession>
<evidence type="ECO:0000255" key="1">
    <source>
        <dbReference type="HAMAP-Rule" id="MF_01582"/>
    </source>
</evidence>
<feature type="chain" id="PRO_0000309135" description="Serine/threonine transporter SstT">
    <location>
        <begin position="1"/>
        <end position="402"/>
    </location>
</feature>
<feature type="transmembrane region" description="Helical" evidence="1">
    <location>
        <begin position="19"/>
        <end position="39"/>
    </location>
</feature>
<feature type="transmembrane region" description="Helical" evidence="1">
    <location>
        <begin position="43"/>
        <end position="63"/>
    </location>
</feature>
<feature type="transmembrane region" description="Helical" evidence="1">
    <location>
        <begin position="86"/>
        <end position="106"/>
    </location>
</feature>
<feature type="transmembrane region" description="Helical" evidence="1">
    <location>
        <begin position="138"/>
        <end position="158"/>
    </location>
</feature>
<feature type="transmembrane region" description="Helical" evidence="1">
    <location>
        <begin position="179"/>
        <end position="199"/>
    </location>
</feature>
<feature type="transmembrane region" description="Helical" evidence="1">
    <location>
        <begin position="212"/>
        <end position="232"/>
    </location>
</feature>
<feature type="transmembrane region" description="Helical" evidence="1">
    <location>
        <begin position="287"/>
        <end position="307"/>
    </location>
</feature>
<feature type="transmembrane region" description="Helical" evidence="1">
    <location>
        <begin position="327"/>
        <end position="347"/>
    </location>
</feature>
<feature type="transmembrane region" description="Helical" evidence="1">
    <location>
        <begin position="354"/>
        <end position="374"/>
    </location>
</feature>
<name>SSTT_STRA3</name>
<gene>
    <name evidence="1" type="primary">sstT</name>
    <name type="ordered locus">gbs1682</name>
</gene>
<comment type="function">
    <text evidence="1">Involved in the import of serine and threonine into the cell, with the concomitant import of sodium (symport system).</text>
</comment>
<comment type="catalytic activity">
    <reaction evidence="1">
        <text>L-serine(in) + Na(+)(in) = L-serine(out) + Na(+)(out)</text>
        <dbReference type="Rhea" id="RHEA:29575"/>
        <dbReference type="ChEBI" id="CHEBI:29101"/>
        <dbReference type="ChEBI" id="CHEBI:33384"/>
    </reaction>
    <physiologicalReaction direction="right-to-left" evidence="1">
        <dbReference type="Rhea" id="RHEA:29577"/>
    </physiologicalReaction>
</comment>
<comment type="catalytic activity">
    <reaction evidence="1">
        <text>L-threonine(in) + Na(+)(in) = L-threonine(out) + Na(+)(out)</text>
        <dbReference type="Rhea" id="RHEA:69999"/>
        <dbReference type="ChEBI" id="CHEBI:29101"/>
        <dbReference type="ChEBI" id="CHEBI:57926"/>
    </reaction>
    <physiologicalReaction direction="right-to-left" evidence="1">
        <dbReference type="Rhea" id="RHEA:70001"/>
    </physiologicalReaction>
</comment>
<comment type="subcellular location">
    <subcellularLocation>
        <location evidence="1">Cell membrane</location>
        <topology evidence="1">Multi-pass membrane protein</topology>
    </subcellularLocation>
</comment>
<comment type="similarity">
    <text evidence="1">Belongs to the dicarboxylate/amino acid:cation symporter (DAACS) (TC 2.A.23) family.</text>
</comment>
<proteinExistence type="inferred from homology"/>
<sequence length="402" mass="42483">MKRFLKAWRKTSLIKKITIGVVIGLFLGILVPKASAIGLLGQLFVGGLKAIAPLLVFTLVISALSQHREGGKTNMSTIIGLYITATFAAALIAVVVNYIFPLTLILKTPAKTDLLPPKGISEVFQSLLLKIVDNPIHAITEANYMSILFWAVIFGLAMRSSNQRTKDLMQTFADATSQVVKWIINLAPIGIMGLVFTSISENGIAILGDYGLLILVLVGTMLFVALVVNPIIAFVMMRKNPYPLVLRCLKDSGITAFFTRSSAANIPVNMRLCEDLGLDKDTYSVSIPLGAAINMAGAAITINILTLAAVNTLGITVDFPTAFLLSVVAAVSACGASGVTGGSLLLIPVACSLFGISNDVAMQVVGVGFIVGVIQDSCETALNSSTDVLFTAVAEKSVFGKK</sequence>
<keyword id="KW-0029">Amino-acid transport</keyword>
<keyword id="KW-1003">Cell membrane</keyword>
<keyword id="KW-0472">Membrane</keyword>
<keyword id="KW-0769">Symport</keyword>
<keyword id="KW-0812">Transmembrane</keyword>
<keyword id="KW-1133">Transmembrane helix</keyword>
<keyword id="KW-0813">Transport</keyword>